<sequence length="335" mass="36485">MKISRSLSTVEVHTGGEAFRIVTSGLPRLPGDTIVRRRAWLKEHADEIRRALMFEPRGHADMYGGYLTEPVSPNADFGVIFVHNEGYSDHCGHGVIALSTAAVELGWVQRTVPETRVGIDAPCGFIEAFVQWDGEHAGPVRFVNVPSFIWQRDVAVDTPSFGTVTGDIAYGGAFYFYVDGAPFDLPVRESAVERLIRFGAEVKAAANAKYPVEHPEIPEINHIYGTIIANAPRDPRSTQANCCVFADREVDRSPTGSGTGGRVAQLYQRGLLAAGDTLVNESIVGTVFKGRVLRETTVGGMPAVIPEVEGSAHICGFANWIVDERDPLTYGFLVR</sequence>
<feature type="chain" id="PRO_0000432253" description="3-hydroxyproline 2-epimerase">
    <location>
        <begin position="1"/>
        <end position="335"/>
    </location>
</feature>
<feature type="active site" description="Proton acceptor" evidence="1">
    <location>
        <position position="91"/>
    </location>
</feature>
<feature type="binding site" evidence="1">
    <location>
        <begin position="92"/>
        <end position="93"/>
    </location>
    <ligand>
        <name>substrate</name>
    </ligand>
</feature>
<feature type="binding site" evidence="1">
    <location>
        <position position="251"/>
    </location>
    <ligand>
        <name>substrate</name>
    </ligand>
</feature>
<feature type="binding site" evidence="1">
    <location>
        <begin position="256"/>
        <end position="257"/>
    </location>
    <ligand>
        <name>substrate</name>
    </ligand>
</feature>
<organism>
    <name type="scientific">Burkholderia multivorans (strain ATCC 17616 / 249)</name>
    <dbReference type="NCBI Taxonomy" id="395019"/>
    <lineage>
        <taxon>Bacteria</taxon>
        <taxon>Pseudomonadati</taxon>
        <taxon>Pseudomonadota</taxon>
        <taxon>Betaproteobacteria</taxon>
        <taxon>Burkholderiales</taxon>
        <taxon>Burkholderiaceae</taxon>
        <taxon>Burkholderia</taxon>
        <taxon>Burkholderia cepacia complex</taxon>
    </lineage>
</organism>
<reference key="1">
    <citation type="submission" date="2007-10" db="EMBL/GenBank/DDBJ databases">
        <title>Complete sequence of chromosome 2 of Burkholderia multivorans ATCC 17616.</title>
        <authorList>
            <person name="Copeland A."/>
            <person name="Lucas S."/>
            <person name="Lapidus A."/>
            <person name="Barry K."/>
            <person name="Glavina del Rio T."/>
            <person name="Dalin E."/>
            <person name="Tice H."/>
            <person name="Pitluck S."/>
            <person name="Chain P."/>
            <person name="Malfatti S."/>
            <person name="Shin M."/>
            <person name="Vergez L."/>
            <person name="Schmutz J."/>
            <person name="Larimer F."/>
            <person name="Land M."/>
            <person name="Hauser L."/>
            <person name="Kyrpides N."/>
            <person name="Kim E."/>
            <person name="Tiedje J."/>
            <person name="Richardson P."/>
        </authorList>
    </citation>
    <scope>NUCLEOTIDE SEQUENCE [LARGE SCALE GENOMIC DNA]</scope>
    <source>
        <strain>ATCC 17616 / 249</strain>
    </source>
</reference>
<reference key="2">
    <citation type="submission" date="2007-04" db="EMBL/GenBank/DDBJ databases">
        <title>Complete genome sequence of Burkholderia multivorans ATCC 17616.</title>
        <authorList>
            <person name="Ohtsubo Y."/>
            <person name="Yamashita A."/>
            <person name="Kurokawa K."/>
            <person name="Takami H."/>
            <person name="Yuhara S."/>
            <person name="Nishiyama E."/>
            <person name="Endo R."/>
            <person name="Miyazaki R."/>
            <person name="Ono A."/>
            <person name="Yano K."/>
            <person name="Ito M."/>
            <person name="Sota M."/>
            <person name="Yuji N."/>
            <person name="Hattori M."/>
            <person name="Tsuda M."/>
        </authorList>
    </citation>
    <scope>NUCLEOTIDE SEQUENCE [LARGE SCALE GENOMIC DNA]</scope>
    <source>
        <strain>ATCC 17616 / 249</strain>
    </source>
</reference>
<reference key="3">
    <citation type="journal article" date="2014" name="Elife">
        <title>Prediction and characterization of enzymatic activities guided by sequence similarity and genome neighborhood networks.</title>
        <authorList>
            <person name="Zhao S."/>
            <person name="Sakai A."/>
            <person name="Zhang X."/>
            <person name="Vetting M.W."/>
            <person name="Kumar R."/>
            <person name="Hillerich B."/>
            <person name="San Francisco B."/>
            <person name="Solbiati J."/>
            <person name="Steves A."/>
            <person name="Brown S."/>
            <person name="Akiva E."/>
            <person name="Barber A."/>
            <person name="Seidel R.D."/>
            <person name="Babbitt P.C."/>
            <person name="Almo S.C."/>
            <person name="Gerlt J.A."/>
            <person name="Jacobson M.P."/>
        </authorList>
    </citation>
    <scope>FUNCTION</scope>
    <scope>CATALYTIC ACTIVITY</scope>
    <scope>BIOPHYSICOCHEMICAL PROPERTIES</scope>
</reference>
<gene>
    <name evidence="6" type="primary">prdF</name>
    <name evidence="5" type="ordered locus">Bmul_4260</name>
    <name evidence="6" type="ordered locus">BMULJ_04246</name>
</gene>
<comment type="function">
    <text evidence="2">Catalyzes the epimerization of trans-3-hydroxy-L-proline (t3LHyp) to cis-3-hydroxy-D-proline (c3DHyp) in vitro. Can also catalyze the epimerization of trans-4-hydroxy-L-proline (t3LHyp) to cis-4-hydroxy-D-proline (c4DHyp), albeit with 3.6-fold lower efficiency. Displays no proline racemase activity.</text>
</comment>
<comment type="catalytic activity">
    <reaction evidence="2">
        <text>trans-3-hydroxy-L-proline = cis-3-hydroxy-D-proline</text>
        <dbReference type="Rhea" id="RHEA:47712"/>
        <dbReference type="ChEBI" id="CHEBI:57938"/>
        <dbReference type="ChEBI" id="CHEBI:87840"/>
    </reaction>
</comment>
<comment type="catalytic activity">
    <reaction evidence="2">
        <text>trans-4-hydroxy-L-proline = cis-4-hydroxy-D-proline</text>
        <dbReference type="Rhea" id="RHEA:21152"/>
        <dbReference type="ChEBI" id="CHEBI:57690"/>
        <dbReference type="ChEBI" id="CHEBI:58375"/>
    </reaction>
</comment>
<comment type="biophysicochemical properties">
    <kinetics>
        <KM evidence="2">2.7 mM for trans-4-hydroxy-L-proline</KM>
        <KM evidence="2">18 mM for trans-3-hydroxy-L-proline</KM>
        <text evidence="2">kcat is 1.3 sec(-1) for t4LHyp epimerization. kcat is 30 sec(-1) for t3LHyp epimerization.</text>
    </kinetics>
</comment>
<comment type="similarity">
    <text evidence="4">Belongs to the proline racemase family.</text>
</comment>
<name>3HYPE_BURM1</name>
<dbReference type="EC" id="5.1.1.-" evidence="2"/>
<dbReference type="EMBL" id="CP000869">
    <property type="protein sequence ID" value="ABX17941.1"/>
    <property type="molecule type" value="Genomic_DNA"/>
</dbReference>
<dbReference type="EMBL" id="AP009386">
    <property type="protein sequence ID" value="BAG46103.1"/>
    <property type="molecule type" value="Genomic_DNA"/>
</dbReference>
<dbReference type="RefSeq" id="WP_012217013.1">
    <property type="nucleotide sequence ID" value="NC_010086.1"/>
</dbReference>
<dbReference type="SMR" id="A9AKG8"/>
<dbReference type="STRING" id="395019.BMULJ_04246"/>
<dbReference type="KEGG" id="bmj:BMULJ_04246"/>
<dbReference type="KEGG" id="bmu:Bmul_4260"/>
<dbReference type="eggNOG" id="COG3938">
    <property type="taxonomic scope" value="Bacteria"/>
</dbReference>
<dbReference type="HOGENOM" id="CLU_036729_0_0_4"/>
<dbReference type="SABIO-RK" id="A9AKG8"/>
<dbReference type="Proteomes" id="UP000008815">
    <property type="component" value="Chromosome 2"/>
</dbReference>
<dbReference type="GO" id="GO:0047580">
    <property type="term" value="F:4-hydroxyproline epimerase activity"/>
    <property type="evidence" value="ECO:0007669"/>
    <property type="project" value="RHEA"/>
</dbReference>
<dbReference type="FunFam" id="3.10.310.10:FF:000029">
    <property type="entry name" value="Trans-3-hydroxy-L-proline dehydratase"/>
    <property type="match status" value="1"/>
</dbReference>
<dbReference type="Gene3D" id="3.10.310.10">
    <property type="entry name" value="Diaminopimelate Epimerase, Chain A, domain 1"/>
    <property type="match status" value="2"/>
</dbReference>
<dbReference type="InterPro" id="IPR053425">
    <property type="entry name" value="Hydroxyproline_Metab_Enz"/>
</dbReference>
<dbReference type="InterPro" id="IPR008794">
    <property type="entry name" value="Pro_racemase_fam"/>
</dbReference>
<dbReference type="NCBIfam" id="NF045511">
    <property type="entry name" value="TransHydProDhtase"/>
    <property type="match status" value="1"/>
</dbReference>
<dbReference type="PANTHER" id="PTHR33442">
    <property type="entry name" value="TRANS-3-HYDROXY-L-PROLINE DEHYDRATASE"/>
    <property type="match status" value="1"/>
</dbReference>
<dbReference type="PANTHER" id="PTHR33442:SF1">
    <property type="entry name" value="TRANS-3-HYDROXY-L-PROLINE DEHYDRATASE"/>
    <property type="match status" value="1"/>
</dbReference>
<dbReference type="Pfam" id="PF05544">
    <property type="entry name" value="Pro_racemase"/>
    <property type="match status" value="1"/>
</dbReference>
<dbReference type="PIRSF" id="PIRSF029792">
    <property type="entry name" value="Pro_racemase"/>
    <property type="match status" value="1"/>
</dbReference>
<dbReference type="SFLD" id="SFLDS00028">
    <property type="entry name" value="Proline_Racemase"/>
    <property type="match status" value="1"/>
</dbReference>
<dbReference type="SUPFAM" id="SSF54506">
    <property type="entry name" value="Diaminopimelate epimerase-like"/>
    <property type="match status" value="1"/>
</dbReference>
<evidence type="ECO:0000250" key="1">
    <source>
        <dbReference type="UniProtKB" id="Q4KGU2"/>
    </source>
</evidence>
<evidence type="ECO:0000269" key="2">
    <source>
    </source>
</evidence>
<evidence type="ECO:0000303" key="3">
    <source>
    </source>
</evidence>
<evidence type="ECO:0000305" key="4"/>
<evidence type="ECO:0000312" key="5">
    <source>
        <dbReference type="EMBL" id="ABX17941.1"/>
    </source>
</evidence>
<evidence type="ECO:0000312" key="6">
    <source>
        <dbReference type="EMBL" id="BAG46103.1"/>
    </source>
</evidence>
<keyword id="KW-0413">Isomerase</keyword>
<keyword id="KW-1185">Reference proteome</keyword>
<protein>
    <recommendedName>
        <fullName evidence="3">3-hydroxyproline 2-epimerase</fullName>
        <shortName>3Hyp 2-epimerase</shortName>
        <shortName evidence="3">3HypE</shortName>
        <ecNumber evidence="2">5.1.1.-</ecNumber>
    </recommendedName>
</protein>
<proteinExistence type="evidence at protein level"/>
<accession>A9AKG8</accession>